<reference key="1">
    <citation type="journal article" date="2002" name="Proc. Natl. Acad. Sci. U.S.A.">
        <title>The complete genome sequence of Chlorobium tepidum TLS, a photosynthetic, anaerobic, green-sulfur bacterium.</title>
        <authorList>
            <person name="Eisen J.A."/>
            <person name="Nelson K.E."/>
            <person name="Paulsen I.T."/>
            <person name="Heidelberg J.F."/>
            <person name="Wu M."/>
            <person name="Dodson R.J."/>
            <person name="DeBoy R.T."/>
            <person name="Gwinn M.L."/>
            <person name="Nelson W.C."/>
            <person name="Haft D.H."/>
            <person name="Hickey E.K."/>
            <person name="Peterson J.D."/>
            <person name="Durkin A.S."/>
            <person name="Kolonay J.F."/>
            <person name="Yang F."/>
            <person name="Holt I.E."/>
            <person name="Umayam L.A."/>
            <person name="Mason T.M."/>
            <person name="Brenner M."/>
            <person name="Shea T.P."/>
            <person name="Parksey D.S."/>
            <person name="Nierman W.C."/>
            <person name="Feldblyum T.V."/>
            <person name="Hansen C.L."/>
            <person name="Craven M.B."/>
            <person name="Radune D."/>
            <person name="Vamathevan J.J."/>
            <person name="Khouri H.M."/>
            <person name="White O."/>
            <person name="Gruber T.M."/>
            <person name="Ketchum K.A."/>
            <person name="Venter J.C."/>
            <person name="Tettelin H."/>
            <person name="Bryant D.A."/>
            <person name="Fraser C.M."/>
        </authorList>
    </citation>
    <scope>NUCLEOTIDE SEQUENCE [LARGE SCALE GENOMIC DNA]</scope>
    <source>
        <strain>ATCC 49652 / DSM 12025 / NBRC 103806 / TLS</strain>
    </source>
</reference>
<keyword id="KW-0238">DNA-binding</keyword>
<keyword id="KW-0479">Metal-binding</keyword>
<keyword id="KW-0533">Nickel</keyword>
<keyword id="KW-1185">Reference proteome</keyword>
<keyword id="KW-0804">Transcription</keyword>
<keyword id="KW-0805">Transcription regulation</keyword>
<organism>
    <name type="scientific">Chlorobaculum tepidum (strain ATCC 49652 / DSM 12025 / NBRC 103806 / TLS)</name>
    <name type="common">Chlorobium tepidum</name>
    <dbReference type="NCBI Taxonomy" id="194439"/>
    <lineage>
        <taxon>Bacteria</taxon>
        <taxon>Pseudomonadati</taxon>
        <taxon>Chlorobiota</taxon>
        <taxon>Chlorobiia</taxon>
        <taxon>Chlorobiales</taxon>
        <taxon>Chlorobiaceae</taxon>
        <taxon>Chlorobaculum</taxon>
    </lineage>
</organism>
<gene>
    <name type="ordered locus">CT0472</name>
</gene>
<dbReference type="EMBL" id="AE006470">
    <property type="protein sequence ID" value="AAM71714.1"/>
    <property type="molecule type" value="Genomic_DNA"/>
</dbReference>
<dbReference type="RefSeq" id="NP_661372.1">
    <property type="nucleotide sequence ID" value="NC_002932.3"/>
</dbReference>
<dbReference type="RefSeq" id="WP_010932159.1">
    <property type="nucleotide sequence ID" value="NC_002932.3"/>
</dbReference>
<dbReference type="SMR" id="Q8KF60"/>
<dbReference type="STRING" id="194439.CT0472"/>
<dbReference type="EnsemblBacteria" id="AAM71714">
    <property type="protein sequence ID" value="AAM71714"/>
    <property type="gene ID" value="CT0472"/>
</dbReference>
<dbReference type="KEGG" id="cte:CT0472"/>
<dbReference type="PATRIC" id="fig|194439.7.peg.458"/>
<dbReference type="eggNOG" id="COG0864">
    <property type="taxonomic scope" value="Bacteria"/>
</dbReference>
<dbReference type="HOGENOM" id="CLU_113319_1_2_10"/>
<dbReference type="OrthoDB" id="9806294at2"/>
<dbReference type="Proteomes" id="UP000001007">
    <property type="component" value="Chromosome"/>
</dbReference>
<dbReference type="GO" id="GO:0003677">
    <property type="term" value="F:DNA binding"/>
    <property type="evidence" value="ECO:0007669"/>
    <property type="project" value="UniProtKB-KW"/>
</dbReference>
<dbReference type="GO" id="GO:0003700">
    <property type="term" value="F:DNA-binding transcription factor activity"/>
    <property type="evidence" value="ECO:0007669"/>
    <property type="project" value="UniProtKB-UniRule"/>
</dbReference>
<dbReference type="GO" id="GO:0016151">
    <property type="term" value="F:nickel cation binding"/>
    <property type="evidence" value="ECO:0007669"/>
    <property type="project" value="UniProtKB-UniRule"/>
</dbReference>
<dbReference type="GO" id="GO:0010045">
    <property type="term" value="P:response to nickel cation"/>
    <property type="evidence" value="ECO:0007669"/>
    <property type="project" value="InterPro"/>
</dbReference>
<dbReference type="CDD" id="cd22231">
    <property type="entry name" value="RHH_NikR_HicB-like"/>
    <property type="match status" value="1"/>
</dbReference>
<dbReference type="Gene3D" id="3.30.70.1150">
    <property type="entry name" value="ACT-like. Chain A, domain 2"/>
    <property type="match status" value="1"/>
</dbReference>
<dbReference type="Gene3D" id="1.10.1220.10">
    <property type="entry name" value="Met repressor-like"/>
    <property type="match status" value="1"/>
</dbReference>
<dbReference type="HAMAP" id="MF_00476">
    <property type="entry name" value="NikR"/>
    <property type="match status" value="1"/>
</dbReference>
<dbReference type="InterPro" id="IPR027271">
    <property type="entry name" value="Acetolactate_synth/TF_NikR_C"/>
</dbReference>
<dbReference type="InterPro" id="IPR045865">
    <property type="entry name" value="ACT-like_dom_sf"/>
</dbReference>
<dbReference type="InterPro" id="IPR013321">
    <property type="entry name" value="Arc_rbn_hlx_hlx"/>
</dbReference>
<dbReference type="InterPro" id="IPR002145">
    <property type="entry name" value="CopG"/>
</dbReference>
<dbReference type="InterPro" id="IPR050192">
    <property type="entry name" value="CopG/NikR_regulator"/>
</dbReference>
<dbReference type="InterPro" id="IPR022988">
    <property type="entry name" value="Ni_resp_reg_NikR"/>
</dbReference>
<dbReference type="InterPro" id="IPR010985">
    <property type="entry name" value="Ribbon_hlx_hlx"/>
</dbReference>
<dbReference type="InterPro" id="IPR014864">
    <property type="entry name" value="TF_NikR_Ni-bd_C"/>
</dbReference>
<dbReference type="NCBIfam" id="NF001884">
    <property type="entry name" value="PRK00630.1"/>
    <property type="match status" value="1"/>
</dbReference>
<dbReference type="NCBIfam" id="NF002169">
    <property type="entry name" value="PRK01002.1"/>
    <property type="match status" value="1"/>
</dbReference>
<dbReference type="NCBIfam" id="NF002815">
    <property type="entry name" value="PRK02967.1"/>
    <property type="match status" value="1"/>
</dbReference>
<dbReference type="NCBIfam" id="NF003381">
    <property type="entry name" value="PRK04460.1"/>
    <property type="match status" value="1"/>
</dbReference>
<dbReference type="PANTHER" id="PTHR34719">
    <property type="entry name" value="NICKEL-RESPONSIVE REGULATOR"/>
    <property type="match status" value="1"/>
</dbReference>
<dbReference type="PANTHER" id="PTHR34719:SF2">
    <property type="entry name" value="NICKEL-RESPONSIVE REGULATOR"/>
    <property type="match status" value="1"/>
</dbReference>
<dbReference type="Pfam" id="PF08753">
    <property type="entry name" value="NikR_C"/>
    <property type="match status" value="1"/>
</dbReference>
<dbReference type="Pfam" id="PF01402">
    <property type="entry name" value="RHH_1"/>
    <property type="match status" value="1"/>
</dbReference>
<dbReference type="SUPFAM" id="SSF55021">
    <property type="entry name" value="ACT-like"/>
    <property type="match status" value="1"/>
</dbReference>
<dbReference type="SUPFAM" id="SSF47598">
    <property type="entry name" value="Ribbon-helix-helix"/>
    <property type="match status" value="1"/>
</dbReference>
<proteinExistence type="inferred from homology"/>
<accession>Q8KF60</accession>
<name>NIKR_CHLTE</name>
<comment type="function">
    <text evidence="1">Transcriptional regulator.</text>
</comment>
<comment type="cofactor">
    <cofactor evidence="1">
        <name>Ni(2+)</name>
        <dbReference type="ChEBI" id="CHEBI:49786"/>
    </cofactor>
    <text evidence="1">Binds 1 nickel ion per subunit.</text>
</comment>
<comment type="similarity">
    <text evidence="1">Belongs to the transcriptional regulatory CopG/NikR family.</text>
</comment>
<feature type="chain" id="PRO_0000139286" description="Putative nickel-responsive regulator">
    <location>
        <begin position="1"/>
        <end position="134"/>
    </location>
</feature>
<feature type="binding site" evidence="1">
    <location>
        <position position="78"/>
    </location>
    <ligand>
        <name>Ni(2+)</name>
        <dbReference type="ChEBI" id="CHEBI:49786"/>
    </ligand>
</feature>
<feature type="binding site" evidence="1">
    <location>
        <position position="89"/>
    </location>
    <ligand>
        <name>Ni(2+)</name>
        <dbReference type="ChEBI" id="CHEBI:49786"/>
    </ligand>
</feature>
<feature type="binding site" evidence="1">
    <location>
        <position position="91"/>
    </location>
    <ligand>
        <name>Ni(2+)</name>
        <dbReference type="ChEBI" id="CHEBI:49786"/>
    </ligand>
</feature>
<feature type="binding site" evidence="1">
    <location>
        <position position="97"/>
    </location>
    <ligand>
        <name>Ni(2+)</name>
        <dbReference type="ChEBI" id="CHEBI:49786"/>
    </ligand>
</feature>
<protein>
    <recommendedName>
        <fullName evidence="1">Putative nickel-responsive regulator</fullName>
    </recommendedName>
</protein>
<sequence length="134" mass="15177">MSDLYRFGISLERKLIESFDRHIKAQGYQSRSEALRDLIREELLRKTTAEGGLVAGAIVMTYDHHKRDLVNRLIDIQHDFHDLIISTQHVHLDHENCLEVIAVKGNAPEIEKLSSALKVLVGVKHLDLSLSSAD</sequence>
<evidence type="ECO:0000255" key="1">
    <source>
        <dbReference type="HAMAP-Rule" id="MF_00476"/>
    </source>
</evidence>